<keyword id="KW-0963">Cytoplasm</keyword>
<keyword id="KW-0210">Decarboxylase</keyword>
<keyword id="KW-0378">Hydrolase</keyword>
<keyword id="KW-0456">Lyase</keyword>
<keyword id="KW-0479">Metal-binding</keyword>
<keyword id="KW-1185">Reference proteome</keyword>
<keyword id="KW-0862">Zinc</keyword>
<accession>A0A075TXZ1</accession>
<accession>A0A0A2KBU1</accession>
<name>PATG_PENEN</name>
<feature type="chain" id="PRO_0000445921" description="6-methylsalicylic acid decarboxylase">
    <location>
        <begin position="1"/>
        <end position="324"/>
    </location>
</feature>
<feature type="binding site" evidence="1">
    <location>
        <position position="7"/>
    </location>
    <ligand>
        <name>Zn(2+)</name>
        <dbReference type="ChEBI" id="CHEBI:29105"/>
    </ligand>
</feature>
<feature type="binding site" evidence="1">
    <location>
        <position position="9"/>
    </location>
    <ligand>
        <name>Zn(2+)</name>
        <dbReference type="ChEBI" id="CHEBI:29105"/>
    </ligand>
</feature>
<feature type="binding site" evidence="1">
    <location>
        <position position="157"/>
    </location>
    <ligand>
        <name>Zn(2+)</name>
        <dbReference type="ChEBI" id="CHEBI:29105"/>
    </ligand>
</feature>
<feature type="binding site" evidence="1">
    <location>
        <position position="274"/>
    </location>
    <ligand>
        <name>Zn(2+)</name>
        <dbReference type="ChEBI" id="CHEBI:29105"/>
    </ligand>
</feature>
<organism>
    <name type="scientific">Penicillium expansum</name>
    <name type="common">Blue mold rot fungus</name>
    <dbReference type="NCBI Taxonomy" id="27334"/>
    <lineage>
        <taxon>Eukaryota</taxon>
        <taxon>Fungi</taxon>
        <taxon>Dikarya</taxon>
        <taxon>Ascomycota</taxon>
        <taxon>Pezizomycotina</taxon>
        <taxon>Eurotiomycetes</taxon>
        <taxon>Eurotiomycetidae</taxon>
        <taxon>Eurotiales</taxon>
        <taxon>Aspergillaceae</taxon>
        <taxon>Penicillium</taxon>
    </lineage>
</organism>
<sequence length="324" mass="35653">MAKIDVHHHFYPPAMRQALDRAGGDPSGWYIPPWTLELDQDITRQMKVTTTILSVTAPGPGIEPDVTKAAALARSCNESAAAIRDAKPQQYGFFASVPSLFDTAAVLKEIEYACTTLRADGVTLFTRYGKGSNYLGHAAFRPIWADLSRRGAVVFIHPTHPVDTQLINTWLPQPMFDYPHETGRAAMDLLTSGILQDYPGCKIILSHAGGTLPYLIHRAATMLPLMPRTLGLSTEELVEAARTFYFDTAISSNPVTLKALFEFAAPGHVLFGSDFPNAPHDAILRFTNFLEAYELPEETKRQVDSGAALELFPRLKGILDKAKL</sequence>
<dbReference type="EC" id="4.1.1.52" evidence="9"/>
<dbReference type="EMBL" id="KF899892">
    <property type="protein sequence ID" value="AIG62133.1"/>
    <property type="molecule type" value="Genomic_DNA"/>
</dbReference>
<dbReference type="EMBL" id="JQFZ01000262">
    <property type="protein sequence ID" value="KGO52628.1"/>
    <property type="status" value="ALT_INIT"/>
    <property type="molecule type" value="Genomic_DNA"/>
</dbReference>
<dbReference type="RefSeq" id="XP_016595358.1">
    <property type="nucleotide sequence ID" value="XM_016745545.1"/>
</dbReference>
<dbReference type="SMR" id="A0A075TXZ1"/>
<dbReference type="STRING" id="27334.A0A075TXZ1"/>
<dbReference type="GeneID" id="27680965"/>
<dbReference type="VEuPathDB" id="FungiDB:PEXP_094330"/>
<dbReference type="HOGENOM" id="CLU_039329_2_1_1"/>
<dbReference type="OrthoDB" id="2832284at2759"/>
<dbReference type="UniPathway" id="UPA00918"/>
<dbReference type="Proteomes" id="UP000030143">
    <property type="component" value="Unassembled WGS sequence"/>
</dbReference>
<dbReference type="GO" id="GO:0005829">
    <property type="term" value="C:cytosol"/>
    <property type="evidence" value="ECO:0000314"/>
    <property type="project" value="GO_Central"/>
</dbReference>
<dbReference type="GO" id="GO:0047596">
    <property type="term" value="F:6-methylsalicylate decarboxylase activity"/>
    <property type="evidence" value="ECO:0000314"/>
    <property type="project" value="GO_Central"/>
</dbReference>
<dbReference type="GO" id="GO:0016787">
    <property type="term" value="F:hydrolase activity"/>
    <property type="evidence" value="ECO:0007669"/>
    <property type="project" value="UniProtKB-KW"/>
</dbReference>
<dbReference type="GO" id="GO:0046872">
    <property type="term" value="F:metal ion binding"/>
    <property type="evidence" value="ECO:0007669"/>
    <property type="project" value="UniProtKB-KW"/>
</dbReference>
<dbReference type="GO" id="GO:0016218">
    <property type="term" value="F:polyketide synthase activity"/>
    <property type="evidence" value="ECO:0000314"/>
    <property type="project" value="UniProt"/>
</dbReference>
<dbReference type="GO" id="GO:0140723">
    <property type="term" value="P:patulin biosynthetic process"/>
    <property type="evidence" value="ECO:0000314"/>
    <property type="project" value="GO_Central"/>
</dbReference>
<dbReference type="Gene3D" id="3.20.20.140">
    <property type="entry name" value="Metal-dependent hydrolases"/>
    <property type="match status" value="1"/>
</dbReference>
<dbReference type="InterPro" id="IPR032465">
    <property type="entry name" value="ACMSD"/>
</dbReference>
<dbReference type="InterPro" id="IPR006680">
    <property type="entry name" value="Amidohydro-rel"/>
</dbReference>
<dbReference type="InterPro" id="IPR032466">
    <property type="entry name" value="Metal_Hydrolase"/>
</dbReference>
<dbReference type="PANTHER" id="PTHR21240">
    <property type="entry name" value="2-AMINO-3-CARBOXYLMUCONATE-6-SEMIALDEHYDE DECARBOXYLASE"/>
    <property type="match status" value="1"/>
</dbReference>
<dbReference type="PANTHER" id="PTHR21240:SF29">
    <property type="entry name" value="AMIDOHYDROLASE-RELATED DOMAIN-CONTAINING PROTEIN"/>
    <property type="match status" value="1"/>
</dbReference>
<dbReference type="Pfam" id="PF04909">
    <property type="entry name" value="Amidohydro_2"/>
    <property type="match status" value="1"/>
</dbReference>
<dbReference type="SUPFAM" id="SSF51556">
    <property type="entry name" value="Metallo-dependent hydrolases"/>
    <property type="match status" value="1"/>
</dbReference>
<comment type="function">
    <text evidence="5 8 9 12">6-methylsalicylic acid decarboxylase; part of the gene cluster that mediates the biosynthesis of patulin, an acetate-derived tetraketide mycotoxin produced by several fungal species that shows antimicrobial properties against several bacteria (PubMed:25625822, PubMed:30100914, PubMed:30680886). PatG catalyzes the decarboxylation of 6-methylsalicylic acid to yield m-cresol (PubMed:30680886). The pathway begins with the synthesis of 6-methylsalicylic acid by the polyketide synthase (PKS) patK via condensation of acetate and malonate units. The 6-methylsalicylic acid decarboxylase patG then catalyzes the decarboxylation of 6-methylsalicylic acid to yield m-cresol (also known as 3-methylphenol). These first reactions occur in the cytosol. The intermediate m-cresol is then transported into the endoplasmic reticulum where the cytochrome P450 monooxygenase patH converts it to m-hydroxybenzyl alcohol, which is further converted to gentisyl alcohol by the cytochrome P450 monooxygenase patI. The oxidoreductases patJ and patO further convert gentisyl alcohol to isoepoxydon in the vacuole. PatN catalyzes then the transformation of isoepoxydon into phyllostine. The cluster protein patF is responsible for the conversion from phyllostine to neopatulin whereas the alcohol dehydrogenase patD converts neopatulin to E-ascladiol. The steps between isoepoxydon and E-ascladiol occur in the cytosol, and E-ascladiol is probably secreted to the extracellular space by one of the cluster-specific transporters patC or patM. Finally, the secreted patulin synthase patE catalyzes the conversion of E-ascladiol to patulin (Probable) (PubMed:30680886).</text>
</comment>
<comment type="catalytic activity">
    <reaction evidence="9">
        <text>6-methylsalicylate + H(+) = 3-methylphenol + CO2</text>
        <dbReference type="Rhea" id="RHEA:23112"/>
        <dbReference type="ChEBI" id="CHEBI:15378"/>
        <dbReference type="ChEBI" id="CHEBI:16526"/>
        <dbReference type="ChEBI" id="CHEBI:17231"/>
        <dbReference type="ChEBI" id="CHEBI:36658"/>
        <dbReference type="EC" id="4.1.1.52"/>
    </reaction>
    <physiologicalReaction direction="left-to-right" evidence="9">
        <dbReference type="Rhea" id="RHEA:23113"/>
    </physiologicalReaction>
</comment>
<comment type="pathway">
    <text evidence="9">Mycotoxin biosynthesis; patulin biosynthesis.</text>
</comment>
<comment type="subunit">
    <text evidence="1">Monomer.</text>
</comment>
<comment type="subcellular location">
    <subcellularLocation>
        <location evidence="9">Cytoplasm</location>
        <location evidence="9">Cytosol</location>
    </subcellularLocation>
</comment>
<comment type="induction">
    <text evidence="4 5 7 8 9">Expression is correlated with the production of patulin (PubMed:25120234). Expression is positively regulated by the secondary metabolism regulator laeA (PubMed:27528575, PubMed:30100914). Expression is strongly decreased with increased sucrose concentrations. This decrease is lost in the presence of malic acid (PubMed:30100914). Expression is increased with pH changes from 2.5 to 3.5 in the presence of a limiting concentration of sucrose, 50 mM (PubMed:30100914). Natural phenols present in apple fruits such as chlorogenic acid or the flavonoid epicatechin modulate patulin biosynthesis. They increase expression in the absence of sucrose, have little impact in the presence of 15 mM sucrose, and decrease expression in 175 mM sucrose (PubMed:30100914). Expression is positively regulated by the patulin cluster-specific transcription factor patL (PubMed:25625822). Finally, expression is also positively regulated by the velvet family proteins transcription regulators veA, velB, velC, but not vosA (PubMed:30680886).</text>
</comment>
<comment type="disruption phenotype">
    <text evidence="9">Completely abolishes the production of patulin.</text>
</comment>
<comment type="biotechnology">
    <text evidence="2 3 6">Patulin was originally used as an antibiotic and specifically trialed to be used against the common cold, but it is no longer used for that purpose since it has been shown to induce immunological, neurological and gastrointestinal effects (PubMed:15082620). Genotoxic effects of patulin with dose-dependent increase in DNA strand breaks in brain, liver and kidneys have been detected in mice (PubMed:22222931). However, more recently, it has been proposed that patulin might also have anti-tumor properties (PubMed:26619846).</text>
</comment>
<comment type="similarity">
    <text evidence="11">Belongs to the metallo-dependent hydrolases superfamily. ACMSD family.</text>
</comment>
<comment type="sequence caution" evidence="11">
    <conflict type="erroneous initiation">
        <sequence resource="EMBL-CDS" id="KGO52628"/>
    </conflict>
    <text>Extended N-terminus.</text>
</comment>
<proteinExistence type="evidence at protein level"/>
<protein>
    <recommendedName>
        <fullName evidence="10">6-methylsalicylic acid decarboxylase</fullName>
        <ecNumber evidence="9">4.1.1.52</ecNumber>
    </recommendedName>
    <alternativeName>
        <fullName evidence="10">Patulin biosynthesis cluster protein G</fullName>
    </alternativeName>
</protein>
<gene>
    <name evidence="10" type="primary">patG</name>
    <name type="ORF">PEX2_082750</name>
</gene>
<evidence type="ECO:0000250" key="1">
    <source>
        <dbReference type="UniProtKB" id="Q8TDX5"/>
    </source>
</evidence>
<evidence type="ECO:0000269" key="2">
    <source>
    </source>
</evidence>
<evidence type="ECO:0000269" key="3">
    <source>
    </source>
</evidence>
<evidence type="ECO:0000269" key="4">
    <source>
    </source>
</evidence>
<evidence type="ECO:0000269" key="5">
    <source>
    </source>
</evidence>
<evidence type="ECO:0000269" key="6">
    <source>
    </source>
</evidence>
<evidence type="ECO:0000269" key="7">
    <source>
    </source>
</evidence>
<evidence type="ECO:0000269" key="8">
    <source>
    </source>
</evidence>
<evidence type="ECO:0000269" key="9">
    <source>
    </source>
</evidence>
<evidence type="ECO:0000303" key="10">
    <source>
    </source>
</evidence>
<evidence type="ECO:0000305" key="11"/>
<evidence type="ECO:0000305" key="12">
    <source>
    </source>
</evidence>
<reference key="1">
    <citation type="journal article" date="2014" name="Int. J. Food Microbiol.">
        <title>Sequencing, physical organization and kinetic expression of the patulin biosynthetic gene cluster from Penicillium expansum.</title>
        <authorList>
            <person name="Tannous J."/>
            <person name="El Khoury R."/>
            <person name="Snini S.P."/>
            <person name="Lippi Y."/>
            <person name="El Khoury A."/>
            <person name="Atoui A."/>
            <person name="Lteif R."/>
            <person name="Oswald I.P."/>
            <person name="Puel O."/>
        </authorList>
    </citation>
    <scope>NUCLEOTIDE SEQUENCE [GENOMIC DNA]</scope>
    <scope>IDENTIFICATION</scope>
    <scope>INDUCTION</scope>
    <source>
        <strain>NRRL 35695</strain>
    </source>
</reference>
<reference key="2">
    <citation type="journal article" date="2015" name="Mol. Plant Microbe Interact.">
        <title>Genome, transcriptome, and functional analyses of Penicillium expansum provide new insights into secondary metabolism and pathogenicity.</title>
        <authorList>
            <person name="Ballester A.R."/>
            <person name="Marcet-Houben M."/>
            <person name="Levin E."/>
            <person name="Sela N."/>
            <person name="Selma-Lazaro C."/>
            <person name="Carmona L."/>
            <person name="Wisniewski M."/>
            <person name="Droby S."/>
            <person name="Gonzalez-Candelas L."/>
            <person name="Gabaldon T."/>
        </authorList>
    </citation>
    <scope>NUCLEOTIDE SEQUENCE [LARGE SCALE GENOMIC DNA]</scope>
    <source>
        <strain>MD-8</strain>
    </source>
</reference>
<reference key="3">
    <citation type="journal article" date="2004" name="Int. J. Epidemiol.">
        <title>Clinical trial of patulin in the common cold. 1944.</title>
        <authorList>
            <consortium name="Patulin Clinical Trials Committee, Medical Research Council"/>
        </authorList>
    </citation>
    <scope>BIOTECHNOLOGY</scope>
</reference>
<reference key="4">
    <citation type="journal article" date="2012" name="Food Chem. Toxicol.">
        <title>DNA damage in organs of mice treated acutely with patulin, a known mycotoxin.</title>
        <authorList>
            <person name="de Melo F.T."/>
            <person name="de Oliveira I.M."/>
            <person name="Greggio S."/>
            <person name="Dacosta J.C."/>
            <person name="Guecheva T.N."/>
            <person name="Saffi J."/>
            <person name="Henriques J.A."/>
            <person name="Rosa R.M."/>
        </authorList>
    </citation>
    <scope>BIOTECHNOLOGY</scope>
</reference>
<reference key="5">
    <citation type="journal article" date="2016" name="Tumor Biol.">
        <title>The potential effect of patulin on mice bearing melanoma cells: an anti-tumour or carcinogenic effect?</title>
        <authorList>
            <person name="Boussabbeh M."/>
            <person name="Ben Salem I."/>
            <person name="Rjiba-Touati K."/>
            <person name="Bouyahya C."/>
            <person name="Neffati F."/>
            <person name="Najjar M.F."/>
            <person name="Bacha H."/>
            <person name="Abid-Essefi S."/>
        </authorList>
    </citation>
    <scope>BIOTECHNOLOGY</scope>
</reference>
<reference key="6">
    <citation type="journal article" date="2017" name="Mol. Plant Pathol.">
        <title>LaeA regulation of secondary metabolism modulates virulence in Penicillium expansum and is mediated by sucrose.</title>
        <authorList>
            <person name="Kumar D."/>
            <person name="Barad S."/>
            <person name="Chen Y."/>
            <person name="Luo X."/>
            <person name="Tannous J."/>
            <person name="Dubey A."/>
            <person name="Glam Matana N."/>
            <person name="Tian S."/>
            <person name="Li B."/>
            <person name="Keller N."/>
            <person name="Prusky D."/>
        </authorList>
    </citation>
    <scope>INDUCTION</scope>
</reference>
<reference key="7">
    <citation type="journal article" date="2018" name="Front. Plant Sci.">
        <title>Apple intrinsic factors modulating the global regulator, LaeA, the patulin gene cluster and patulin accumulation during fruit colonization by Penicillium expansum.</title>
        <authorList>
            <person name="Kumar D."/>
            <person name="Tannous J."/>
            <person name="Sionov E."/>
            <person name="Keller N."/>
            <person name="Prusky D."/>
        </authorList>
    </citation>
    <scope>FUNCTION</scope>
    <scope>INDUCTION</scope>
</reference>
<reference key="8">
    <citation type="journal article" date="2015" name="Mol. Plant Microbe Interact.">
        <title>Genomic characterization reveals insights into patulin biosynthesis and pathogenicity in Penicillium species.</title>
        <authorList>
            <person name="Li B."/>
            <person name="Zong Y."/>
            <person name="Du Z."/>
            <person name="Chen Y."/>
            <person name="Zhang Z."/>
            <person name="Qin G."/>
            <person name="Zhao W."/>
            <person name="Tian S."/>
        </authorList>
    </citation>
    <scope>FUNCTION</scope>
    <scope>INDUCTION</scope>
</reference>
<reference key="9">
    <citation type="journal article" date="2019" name="Environ. Microbiol.">
        <title>Dissection of patulin biosynthesis, spatial control and regulation mechanism in Penicillium expansum.</title>
        <authorList>
            <person name="Li B."/>
            <person name="Chen Y."/>
            <person name="Zong Y."/>
            <person name="Shang Y."/>
            <person name="Zhang Z."/>
            <person name="Xu X."/>
            <person name="Wang X."/>
            <person name="Long M."/>
            <person name="Tian S."/>
        </authorList>
    </citation>
    <scope>FUNCTION</scope>
    <scope>DISRUPTION PHENOTYPE</scope>
    <scope>SUBCELLULAR LOCATION</scope>
    <scope>CATALYTIC ACTIVITY</scope>
    <scope>INDUCTION</scope>
    <scope>PATHWAY</scope>
</reference>